<organism>
    <name type="scientific">Escherichia fergusonii (strain ATCC 35469 / DSM 13698 / CCUG 18766 / IAM 14443 / JCM 21226 / LMG 7866 / NBRC 102419 / NCTC 12128 / CDC 0568-73)</name>
    <dbReference type="NCBI Taxonomy" id="585054"/>
    <lineage>
        <taxon>Bacteria</taxon>
        <taxon>Pseudomonadati</taxon>
        <taxon>Pseudomonadota</taxon>
        <taxon>Gammaproteobacteria</taxon>
        <taxon>Enterobacterales</taxon>
        <taxon>Enterobacteriaceae</taxon>
        <taxon>Escherichia</taxon>
    </lineage>
</organism>
<proteinExistence type="inferred from homology"/>
<comment type="function">
    <text evidence="1">Bifunctional serine/threonine kinase and phosphorylase involved in the regulation of the phosphoenolpyruvate synthase (PEPS) by catalyzing its phosphorylation/dephosphorylation.</text>
</comment>
<comment type="catalytic activity">
    <reaction evidence="1">
        <text>[pyruvate, water dikinase] + ADP = [pyruvate, water dikinase]-phosphate + AMP + H(+)</text>
        <dbReference type="Rhea" id="RHEA:46020"/>
        <dbReference type="Rhea" id="RHEA-COMP:11425"/>
        <dbReference type="Rhea" id="RHEA-COMP:11426"/>
        <dbReference type="ChEBI" id="CHEBI:15378"/>
        <dbReference type="ChEBI" id="CHEBI:43176"/>
        <dbReference type="ChEBI" id="CHEBI:68546"/>
        <dbReference type="ChEBI" id="CHEBI:456215"/>
        <dbReference type="ChEBI" id="CHEBI:456216"/>
        <dbReference type="EC" id="2.7.11.33"/>
    </reaction>
</comment>
<comment type="catalytic activity">
    <reaction evidence="1">
        <text>[pyruvate, water dikinase]-phosphate + phosphate + H(+) = [pyruvate, water dikinase] + diphosphate</text>
        <dbReference type="Rhea" id="RHEA:48580"/>
        <dbReference type="Rhea" id="RHEA-COMP:11425"/>
        <dbReference type="Rhea" id="RHEA-COMP:11426"/>
        <dbReference type="ChEBI" id="CHEBI:15378"/>
        <dbReference type="ChEBI" id="CHEBI:33019"/>
        <dbReference type="ChEBI" id="CHEBI:43176"/>
        <dbReference type="ChEBI" id="CHEBI:43474"/>
        <dbReference type="ChEBI" id="CHEBI:68546"/>
        <dbReference type="EC" id="2.7.4.28"/>
    </reaction>
</comment>
<comment type="similarity">
    <text evidence="1">Belongs to the pyruvate, phosphate/water dikinase regulatory protein family. PSRP subfamily.</text>
</comment>
<keyword id="KW-0418">Kinase</keyword>
<keyword id="KW-0547">Nucleotide-binding</keyword>
<keyword id="KW-0723">Serine/threonine-protein kinase</keyword>
<keyword id="KW-0808">Transferase</keyword>
<reference key="1">
    <citation type="journal article" date="2009" name="PLoS Genet.">
        <title>Organised genome dynamics in the Escherichia coli species results in highly diverse adaptive paths.</title>
        <authorList>
            <person name="Touchon M."/>
            <person name="Hoede C."/>
            <person name="Tenaillon O."/>
            <person name="Barbe V."/>
            <person name="Baeriswyl S."/>
            <person name="Bidet P."/>
            <person name="Bingen E."/>
            <person name="Bonacorsi S."/>
            <person name="Bouchier C."/>
            <person name="Bouvet O."/>
            <person name="Calteau A."/>
            <person name="Chiapello H."/>
            <person name="Clermont O."/>
            <person name="Cruveiller S."/>
            <person name="Danchin A."/>
            <person name="Diard M."/>
            <person name="Dossat C."/>
            <person name="Karoui M.E."/>
            <person name="Frapy E."/>
            <person name="Garry L."/>
            <person name="Ghigo J.M."/>
            <person name="Gilles A.M."/>
            <person name="Johnson J."/>
            <person name="Le Bouguenec C."/>
            <person name="Lescat M."/>
            <person name="Mangenot S."/>
            <person name="Martinez-Jehanne V."/>
            <person name="Matic I."/>
            <person name="Nassif X."/>
            <person name="Oztas S."/>
            <person name="Petit M.A."/>
            <person name="Pichon C."/>
            <person name="Rouy Z."/>
            <person name="Ruf C.S."/>
            <person name="Schneider D."/>
            <person name="Tourret J."/>
            <person name="Vacherie B."/>
            <person name="Vallenet D."/>
            <person name="Medigue C."/>
            <person name="Rocha E.P.C."/>
            <person name="Denamur E."/>
        </authorList>
    </citation>
    <scope>NUCLEOTIDE SEQUENCE [LARGE SCALE GENOMIC DNA]</scope>
    <source>
        <strain>ATCC 35469 / DSM 13698 / BCRC 15582 / CCUG 18766 / IAM 14443 / JCM 21226 / LMG 7866 / NBRC 102419 / NCTC 12128 / CDC 0568-73</strain>
    </source>
</reference>
<evidence type="ECO:0000255" key="1">
    <source>
        <dbReference type="HAMAP-Rule" id="MF_01062"/>
    </source>
</evidence>
<name>PSRP_ESCF3</name>
<feature type="chain" id="PRO_1000136475" description="Phosphoenolpyruvate synthase regulatory protein">
    <location>
        <begin position="1"/>
        <end position="277"/>
    </location>
</feature>
<feature type="binding site" evidence="1">
    <location>
        <begin position="157"/>
        <end position="164"/>
    </location>
    <ligand>
        <name>ADP</name>
        <dbReference type="ChEBI" id="CHEBI:456216"/>
    </ligand>
</feature>
<accession>B7LQ85</accession>
<gene>
    <name evidence="1" type="primary">ppsR</name>
    <name type="ordered locus">EFER_1361</name>
</gene>
<dbReference type="EC" id="2.7.11.33" evidence="1"/>
<dbReference type="EC" id="2.7.4.28" evidence="1"/>
<dbReference type="EMBL" id="CU928158">
    <property type="protein sequence ID" value="CAQ88882.1"/>
    <property type="molecule type" value="Genomic_DNA"/>
</dbReference>
<dbReference type="RefSeq" id="WP_000376530.1">
    <property type="nucleotide sequence ID" value="NC_011740.1"/>
</dbReference>
<dbReference type="SMR" id="B7LQ85"/>
<dbReference type="GeneID" id="75057597"/>
<dbReference type="KEGG" id="efe:EFER_1361"/>
<dbReference type="HOGENOM" id="CLU_046206_1_0_6"/>
<dbReference type="OrthoDB" id="9782201at2"/>
<dbReference type="Proteomes" id="UP000000745">
    <property type="component" value="Chromosome"/>
</dbReference>
<dbReference type="GO" id="GO:0043531">
    <property type="term" value="F:ADP binding"/>
    <property type="evidence" value="ECO:0007669"/>
    <property type="project" value="UniProtKB-UniRule"/>
</dbReference>
<dbReference type="GO" id="GO:0005524">
    <property type="term" value="F:ATP binding"/>
    <property type="evidence" value="ECO:0007669"/>
    <property type="project" value="InterPro"/>
</dbReference>
<dbReference type="GO" id="GO:0003677">
    <property type="term" value="F:DNA binding"/>
    <property type="evidence" value="ECO:0007669"/>
    <property type="project" value="InterPro"/>
</dbReference>
<dbReference type="GO" id="GO:0016776">
    <property type="term" value="F:phosphotransferase activity, phosphate group as acceptor"/>
    <property type="evidence" value="ECO:0007669"/>
    <property type="project" value="UniProtKB-UniRule"/>
</dbReference>
<dbReference type="GO" id="GO:0004674">
    <property type="term" value="F:protein serine/threonine kinase activity"/>
    <property type="evidence" value="ECO:0007669"/>
    <property type="project" value="UniProtKB-UniRule"/>
</dbReference>
<dbReference type="GO" id="GO:0006355">
    <property type="term" value="P:regulation of DNA-templated transcription"/>
    <property type="evidence" value="ECO:0007669"/>
    <property type="project" value="InterPro"/>
</dbReference>
<dbReference type="HAMAP" id="MF_01062">
    <property type="entry name" value="PSRP"/>
    <property type="match status" value="1"/>
</dbReference>
<dbReference type="InterPro" id="IPR005177">
    <property type="entry name" value="Kinase-pyrophosphorylase"/>
</dbReference>
<dbReference type="InterPro" id="IPR026530">
    <property type="entry name" value="PSRP"/>
</dbReference>
<dbReference type="InterPro" id="IPR008917">
    <property type="entry name" value="TF_DNA-bd_sf"/>
</dbReference>
<dbReference type="NCBIfam" id="NF003742">
    <property type="entry name" value="PRK05339.1"/>
    <property type="match status" value="1"/>
</dbReference>
<dbReference type="PANTHER" id="PTHR31756">
    <property type="entry name" value="PYRUVATE, PHOSPHATE DIKINASE REGULATORY PROTEIN 1, CHLOROPLASTIC"/>
    <property type="match status" value="1"/>
</dbReference>
<dbReference type="PANTHER" id="PTHR31756:SF3">
    <property type="entry name" value="PYRUVATE, PHOSPHATE DIKINASE REGULATORY PROTEIN 1, CHLOROPLASTIC"/>
    <property type="match status" value="1"/>
</dbReference>
<dbReference type="Pfam" id="PF03618">
    <property type="entry name" value="Kinase-PPPase"/>
    <property type="match status" value="1"/>
</dbReference>
<dbReference type="SUPFAM" id="SSF47454">
    <property type="entry name" value="A DNA-binding domain in eukaryotic transcription factors"/>
    <property type="match status" value="1"/>
</dbReference>
<sequence>MDSAVDRHVFYISDGTAITAEVLGHAVMSQFPVTISSITLPFVENESRARAVKDQIDAIYHQTGVRPLVFYSIVLPEIRAIILQSEGFCQDIVQALVAPLQQEMKLDPTPIAHRTHGLTPGNLNKYDARIAAIDYTLAHDDGISLRNLDQAQVILLGVSRCGKTPTSLYLAMQFGIRAANYPFIADDMDNLVLPASLKPLQHKLFGLTINPERLAAIREERRENSRYASLRQCRMEVAEVEALYRKNQIPWINSTNYSVEEIATKILDIMGLNRRMY</sequence>
<protein>
    <recommendedName>
        <fullName evidence="1">Phosphoenolpyruvate synthase regulatory protein</fullName>
        <shortName evidence="1">PEP synthase regulatory protein</shortName>
        <shortName evidence="1">PSRP</shortName>
        <ecNumber evidence="1">2.7.11.33</ecNumber>
        <ecNumber evidence="1">2.7.4.28</ecNumber>
    </recommendedName>
    <alternativeName>
        <fullName evidence="1">Pyruvate, water dikinase regulatory protein</fullName>
    </alternativeName>
</protein>